<proteinExistence type="inferred from homology"/>
<gene>
    <name evidence="1" type="primary">metN1</name>
    <name type="ordered locus">PP_0114</name>
</gene>
<feature type="chain" id="PRO_0000270352" description="Methionine import ATP-binding protein MetN 1">
    <location>
        <begin position="1"/>
        <end position="335"/>
    </location>
</feature>
<feature type="domain" description="ABC transporter" evidence="1">
    <location>
        <begin position="2"/>
        <end position="242"/>
    </location>
</feature>
<feature type="binding site" evidence="1">
    <location>
        <begin position="38"/>
        <end position="45"/>
    </location>
    <ligand>
        <name>ATP</name>
        <dbReference type="ChEBI" id="CHEBI:30616"/>
    </ligand>
</feature>
<reference key="1">
    <citation type="journal article" date="2002" name="Environ. Microbiol.">
        <title>Complete genome sequence and comparative analysis of the metabolically versatile Pseudomonas putida KT2440.</title>
        <authorList>
            <person name="Nelson K.E."/>
            <person name="Weinel C."/>
            <person name="Paulsen I.T."/>
            <person name="Dodson R.J."/>
            <person name="Hilbert H."/>
            <person name="Martins dos Santos V.A.P."/>
            <person name="Fouts D.E."/>
            <person name="Gill S.R."/>
            <person name="Pop M."/>
            <person name="Holmes M."/>
            <person name="Brinkac L.M."/>
            <person name="Beanan M.J."/>
            <person name="DeBoy R.T."/>
            <person name="Daugherty S.C."/>
            <person name="Kolonay J.F."/>
            <person name="Madupu R."/>
            <person name="Nelson W.C."/>
            <person name="White O."/>
            <person name="Peterson J.D."/>
            <person name="Khouri H.M."/>
            <person name="Hance I."/>
            <person name="Chris Lee P."/>
            <person name="Holtzapple E.K."/>
            <person name="Scanlan D."/>
            <person name="Tran K."/>
            <person name="Moazzez A."/>
            <person name="Utterback T.R."/>
            <person name="Rizzo M."/>
            <person name="Lee K."/>
            <person name="Kosack D."/>
            <person name="Moestl D."/>
            <person name="Wedler H."/>
            <person name="Lauber J."/>
            <person name="Stjepandic D."/>
            <person name="Hoheisel J."/>
            <person name="Straetz M."/>
            <person name="Heim S."/>
            <person name="Kiewitz C."/>
            <person name="Eisen J.A."/>
            <person name="Timmis K.N."/>
            <person name="Duesterhoeft A."/>
            <person name="Tuemmler B."/>
            <person name="Fraser C.M."/>
        </authorList>
    </citation>
    <scope>NUCLEOTIDE SEQUENCE [LARGE SCALE GENOMIC DNA]</scope>
    <source>
        <strain>ATCC 47054 / DSM 6125 / CFBP 8728 / NCIMB 11950 / KT2440</strain>
    </source>
</reference>
<comment type="function">
    <text evidence="1">Part of the ABC transporter complex MetNIQ involved in methionine import. Responsible for energy coupling to the transport system.</text>
</comment>
<comment type="catalytic activity">
    <reaction evidence="1">
        <text>L-methionine(out) + ATP + H2O = L-methionine(in) + ADP + phosphate + H(+)</text>
        <dbReference type="Rhea" id="RHEA:29779"/>
        <dbReference type="ChEBI" id="CHEBI:15377"/>
        <dbReference type="ChEBI" id="CHEBI:15378"/>
        <dbReference type="ChEBI" id="CHEBI:30616"/>
        <dbReference type="ChEBI" id="CHEBI:43474"/>
        <dbReference type="ChEBI" id="CHEBI:57844"/>
        <dbReference type="ChEBI" id="CHEBI:456216"/>
        <dbReference type="EC" id="7.4.2.11"/>
    </reaction>
</comment>
<comment type="catalytic activity">
    <reaction evidence="1">
        <text>D-methionine(out) + ATP + H2O = D-methionine(in) + ADP + phosphate + H(+)</text>
        <dbReference type="Rhea" id="RHEA:29767"/>
        <dbReference type="ChEBI" id="CHEBI:15377"/>
        <dbReference type="ChEBI" id="CHEBI:15378"/>
        <dbReference type="ChEBI" id="CHEBI:30616"/>
        <dbReference type="ChEBI" id="CHEBI:43474"/>
        <dbReference type="ChEBI" id="CHEBI:57932"/>
        <dbReference type="ChEBI" id="CHEBI:456216"/>
        <dbReference type="EC" id="7.4.2.11"/>
    </reaction>
</comment>
<comment type="subunit">
    <text evidence="1">The complex is composed of two ATP-binding proteins (MetN), two transmembrane proteins (MetI) and a solute-binding protein (MetQ).</text>
</comment>
<comment type="subcellular location">
    <subcellularLocation>
        <location evidence="1">Cell inner membrane</location>
        <topology evidence="1">Peripheral membrane protein</topology>
    </subcellularLocation>
</comment>
<comment type="similarity">
    <text evidence="1">Belongs to the ABC transporter superfamily. Methionine importer (TC 3.A.1.24) family.</text>
</comment>
<sequence>MIEFQQVHKTYRVAGREIPALNPTSLTIEDGQVFGLIGHSGAGKSTMLRLINRLEEPSGGTIIVDGEDVTAFNASQLRGFRQQVGMIFQHFNLLASKTVADNVALPLALAGELSRSEIDKRVTELLARVGLSDHAKKYPAQLSGGQKQRVGIARALSTNPKILLCDEATSALDPQTTASVLQLLAEINRELKLTIVLITHEMDVIRRVCDRVAVMDAGQIVEQGSVAEVFLHPQHPTTKRFVQEDEQVDEGEQRDDFAHVPGRIVRLTFQGDATYAPLLGTVARETGVDYSILAGRIDRIKDVPYGQLTLALIGGDMEAAFARFKAADVHMEVLR</sequence>
<accession>Q88RL5</accession>
<dbReference type="EC" id="7.4.2.11" evidence="1"/>
<dbReference type="EMBL" id="AE015451">
    <property type="protein sequence ID" value="AAN65748.1"/>
    <property type="molecule type" value="Genomic_DNA"/>
</dbReference>
<dbReference type="RefSeq" id="NP_742284.1">
    <property type="nucleotide sequence ID" value="NC_002947.4"/>
</dbReference>
<dbReference type="RefSeq" id="WP_003253013.1">
    <property type="nucleotide sequence ID" value="NZ_CP169744.1"/>
</dbReference>
<dbReference type="SMR" id="Q88RL5"/>
<dbReference type="STRING" id="160488.PP_0114"/>
<dbReference type="PaxDb" id="160488-PP_0114"/>
<dbReference type="KEGG" id="ppu:PP_0114"/>
<dbReference type="PATRIC" id="fig|160488.4.peg.116"/>
<dbReference type="eggNOG" id="COG1135">
    <property type="taxonomic scope" value="Bacteria"/>
</dbReference>
<dbReference type="HOGENOM" id="CLU_000604_1_3_6"/>
<dbReference type="OrthoDB" id="9802264at2"/>
<dbReference type="PhylomeDB" id="Q88RL5"/>
<dbReference type="BioCyc" id="PPUT160488:G1G01-119-MONOMER"/>
<dbReference type="Proteomes" id="UP000000556">
    <property type="component" value="Chromosome"/>
</dbReference>
<dbReference type="GO" id="GO:0005886">
    <property type="term" value="C:plasma membrane"/>
    <property type="evidence" value="ECO:0007669"/>
    <property type="project" value="UniProtKB-SubCell"/>
</dbReference>
<dbReference type="GO" id="GO:0033232">
    <property type="term" value="F:ABC-type D-methionine transporter activity"/>
    <property type="evidence" value="ECO:0007669"/>
    <property type="project" value="UniProtKB-EC"/>
</dbReference>
<dbReference type="GO" id="GO:0005524">
    <property type="term" value="F:ATP binding"/>
    <property type="evidence" value="ECO:0007669"/>
    <property type="project" value="UniProtKB-KW"/>
</dbReference>
<dbReference type="GO" id="GO:0016887">
    <property type="term" value="F:ATP hydrolysis activity"/>
    <property type="evidence" value="ECO:0007669"/>
    <property type="project" value="InterPro"/>
</dbReference>
<dbReference type="CDD" id="cd03258">
    <property type="entry name" value="ABC_MetN_methionine_transporter"/>
    <property type="match status" value="1"/>
</dbReference>
<dbReference type="FunFam" id="3.40.50.300:FF:000056">
    <property type="entry name" value="Cell division ATP-binding protein FtsE"/>
    <property type="match status" value="1"/>
</dbReference>
<dbReference type="FunFam" id="3.30.70.260:FF:000038">
    <property type="entry name" value="Methionine import ATP-binding protein MetN"/>
    <property type="match status" value="1"/>
</dbReference>
<dbReference type="Gene3D" id="3.30.70.260">
    <property type="match status" value="1"/>
</dbReference>
<dbReference type="Gene3D" id="3.40.50.300">
    <property type="entry name" value="P-loop containing nucleotide triphosphate hydrolases"/>
    <property type="match status" value="1"/>
</dbReference>
<dbReference type="InterPro" id="IPR003593">
    <property type="entry name" value="AAA+_ATPase"/>
</dbReference>
<dbReference type="InterPro" id="IPR003439">
    <property type="entry name" value="ABC_transporter-like_ATP-bd"/>
</dbReference>
<dbReference type="InterPro" id="IPR017871">
    <property type="entry name" value="ABC_transporter-like_CS"/>
</dbReference>
<dbReference type="InterPro" id="IPR045865">
    <property type="entry name" value="ACT-like_dom_sf"/>
</dbReference>
<dbReference type="InterPro" id="IPR041701">
    <property type="entry name" value="MetN_ABC"/>
</dbReference>
<dbReference type="InterPro" id="IPR050086">
    <property type="entry name" value="MetN_ABC_transporter-like"/>
</dbReference>
<dbReference type="InterPro" id="IPR018449">
    <property type="entry name" value="NIL_domain"/>
</dbReference>
<dbReference type="InterPro" id="IPR027417">
    <property type="entry name" value="P-loop_NTPase"/>
</dbReference>
<dbReference type="PANTHER" id="PTHR43166">
    <property type="entry name" value="AMINO ACID IMPORT ATP-BINDING PROTEIN"/>
    <property type="match status" value="1"/>
</dbReference>
<dbReference type="PANTHER" id="PTHR43166:SF30">
    <property type="entry name" value="METHIONINE IMPORT ATP-BINDING PROTEIN METN"/>
    <property type="match status" value="1"/>
</dbReference>
<dbReference type="Pfam" id="PF00005">
    <property type="entry name" value="ABC_tran"/>
    <property type="match status" value="1"/>
</dbReference>
<dbReference type="Pfam" id="PF09383">
    <property type="entry name" value="NIL"/>
    <property type="match status" value="1"/>
</dbReference>
<dbReference type="SMART" id="SM00382">
    <property type="entry name" value="AAA"/>
    <property type="match status" value="1"/>
</dbReference>
<dbReference type="SMART" id="SM00930">
    <property type="entry name" value="NIL"/>
    <property type="match status" value="1"/>
</dbReference>
<dbReference type="SUPFAM" id="SSF55021">
    <property type="entry name" value="ACT-like"/>
    <property type="match status" value="1"/>
</dbReference>
<dbReference type="SUPFAM" id="SSF52540">
    <property type="entry name" value="P-loop containing nucleoside triphosphate hydrolases"/>
    <property type="match status" value="1"/>
</dbReference>
<dbReference type="PROSITE" id="PS00211">
    <property type="entry name" value="ABC_TRANSPORTER_1"/>
    <property type="match status" value="1"/>
</dbReference>
<dbReference type="PROSITE" id="PS50893">
    <property type="entry name" value="ABC_TRANSPORTER_2"/>
    <property type="match status" value="1"/>
</dbReference>
<dbReference type="PROSITE" id="PS51264">
    <property type="entry name" value="METN"/>
    <property type="match status" value="1"/>
</dbReference>
<evidence type="ECO:0000255" key="1">
    <source>
        <dbReference type="HAMAP-Rule" id="MF_01719"/>
    </source>
</evidence>
<protein>
    <recommendedName>
        <fullName evidence="1">Methionine import ATP-binding protein MetN 1</fullName>
        <ecNumber evidence="1">7.4.2.11</ecNumber>
    </recommendedName>
</protein>
<organism>
    <name type="scientific">Pseudomonas putida (strain ATCC 47054 / DSM 6125 / CFBP 8728 / NCIMB 11950 / KT2440)</name>
    <dbReference type="NCBI Taxonomy" id="160488"/>
    <lineage>
        <taxon>Bacteria</taxon>
        <taxon>Pseudomonadati</taxon>
        <taxon>Pseudomonadota</taxon>
        <taxon>Gammaproteobacteria</taxon>
        <taxon>Pseudomonadales</taxon>
        <taxon>Pseudomonadaceae</taxon>
        <taxon>Pseudomonas</taxon>
    </lineage>
</organism>
<keyword id="KW-0029">Amino-acid transport</keyword>
<keyword id="KW-0067">ATP-binding</keyword>
<keyword id="KW-0997">Cell inner membrane</keyword>
<keyword id="KW-1003">Cell membrane</keyword>
<keyword id="KW-0472">Membrane</keyword>
<keyword id="KW-0547">Nucleotide-binding</keyword>
<keyword id="KW-1185">Reference proteome</keyword>
<keyword id="KW-1278">Translocase</keyword>
<keyword id="KW-0813">Transport</keyword>
<name>METN1_PSEPK</name>